<organism>
    <name type="scientific">Xenopus laevis</name>
    <name type="common">African clawed frog</name>
    <dbReference type="NCBI Taxonomy" id="8355"/>
    <lineage>
        <taxon>Eukaryota</taxon>
        <taxon>Metazoa</taxon>
        <taxon>Chordata</taxon>
        <taxon>Craniata</taxon>
        <taxon>Vertebrata</taxon>
        <taxon>Euteleostomi</taxon>
        <taxon>Amphibia</taxon>
        <taxon>Batrachia</taxon>
        <taxon>Anura</taxon>
        <taxon>Pipoidea</taxon>
        <taxon>Pipidae</taxon>
        <taxon>Xenopodinae</taxon>
        <taxon>Xenopus</taxon>
        <taxon>Xenopus</taxon>
    </lineage>
</organism>
<name>CLC3A_XENLA</name>
<proteinExistence type="evidence at transcript level"/>
<accession>Q66KU1</accession>
<evidence type="ECO:0000255" key="1"/>
<evidence type="ECO:0000255" key="2">
    <source>
        <dbReference type="PROSITE-ProRule" id="PRU00040"/>
    </source>
</evidence>
<evidence type="ECO:0000305" key="3"/>
<reference key="1">
    <citation type="submission" date="2004-07" db="EMBL/GenBank/DDBJ databases">
        <authorList>
            <consortium name="NIH - Xenopus Gene Collection (XGC) project"/>
        </authorList>
    </citation>
    <scope>NUCLEOTIDE SEQUENCE [LARGE SCALE MRNA]</scope>
</reference>
<sequence length="193" mass="22098">MAQAGLLIWLFFTILLLDLTCTQSAKLKTQKDHRSKEKDGDLKTQIDKLWREINSLKEMQALQTVCLRGTKIHKKCYLSFEETKHFHEANEDCIAKGGTLAIPRDSEENNALRDYGKKSLHGSGEFWLGINDMVNEGKFVDVNGVAITYFNWERIPKGGKRKNCALLNQASQGKWVDEVCRSLKKYICEFIIP</sequence>
<comment type="subcellular location">
    <subcellularLocation>
        <location evidence="3">Secreted</location>
    </subcellularLocation>
</comment>
<feature type="signal peptide" evidence="1">
    <location>
        <begin position="1"/>
        <end position="24"/>
    </location>
</feature>
<feature type="chain" id="PRO_0000017376" description="C-type lectin domain family 3 member A homolog">
    <location>
        <begin position="25"/>
        <end position="193"/>
    </location>
</feature>
<feature type="domain" description="C-type lectin" evidence="2">
    <location>
        <begin position="72"/>
        <end position="189"/>
    </location>
</feature>
<feature type="disulfide bond" evidence="2">
    <location>
        <begin position="66"/>
        <end position="76"/>
    </location>
</feature>
<feature type="disulfide bond" evidence="2">
    <location>
        <begin position="93"/>
        <end position="188"/>
    </location>
</feature>
<feature type="disulfide bond" evidence="2">
    <location>
        <begin position="164"/>
        <end position="180"/>
    </location>
</feature>
<protein>
    <recommendedName>
        <fullName>C-type lectin domain family 3 member A homolog</fullName>
    </recommendedName>
    <alternativeName>
        <fullName>C-type lectin superfamily member 1 homolog</fullName>
    </alternativeName>
</protein>
<gene>
    <name type="primary">clec3a</name>
    <name type="synonym">clecsf1</name>
</gene>
<dbReference type="EMBL" id="BC078559">
    <property type="protein sequence ID" value="AAH78559.1"/>
    <property type="molecule type" value="mRNA"/>
</dbReference>
<dbReference type="RefSeq" id="NP_001087325.1">
    <property type="nucleotide sequence ID" value="NM_001093856.2"/>
</dbReference>
<dbReference type="SMR" id="Q66KU1"/>
<dbReference type="DNASU" id="447148"/>
<dbReference type="GeneID" id="447148"/>
<dbReference type="KEGG" id="xla:447148"/>
<dbReference type="AGR" id="Xenbase:XB-GENE-986192"/>
<dbReference type="CTD" id="447148"/>
<dbReference type="Xenbase" id="XB-GENE-986192">
    <property type="gene designation" value="clec3a.L"/>
</dbReference>
<dbReference type="OMA" id="FICEFTI"/>
<dbReference type="OrthoDB" id="10032136at2759"/>
<dbReference type="Proteomes" id="UP000186698">
    <property type="component" value="Chromosome 4L"/>
</dbReference>
<dbReference type="Bgee" id="447148">
    <property type="expression patterns" value="Expressed in zone of skin and 1 other cell type or tissue"/>
</dbReference>
<dbReference type="GO" id="GO:0005615">
    <property type="term" value="C:extracellular space"/>
    <property type="evidence" value="ECO:0007669"/>
    <property type="project" value="TreeGrafter"/>
</dbReference>
<dbReference type="GO" id="GO:0030246">
    <property type="term" value="F:carbohydrate binding"/>
    <property type="evidence" value="ECO:0007669"/>
    <property type="project" value="UniProtKB-KW"/>
</dbReference>
<dbReference type="GO" id="GO:0001503">
    <property type="term" value="P:ossification"/>
    <property type="evidence" value="ECO:0007669"/>
    <property type="project" value="TreeGrafter"/>
</dbReference>
<dbReference type="CDD" id="cd03596">
    <property type="entry name" value="CLECT_tetranectin_like"/>
    <property type="match status" value="1"/>
</dbReference>
<dbReference type="FunFam" id="3.10.100.10:FF:000010">
    <property type="entry name" value="C-type lectin domain family 3 member A"/>
    <property type="match status" value="1"/>
</dbReference>
<dbReference type="Gene3D" id="3.10.100.10">
    <property type="entry name" value="Mannose-Binding Protein A, subunit A"/>
    <property type="match status" value="1"/>
</dbReference>
<dbReference type="InterPro" id="IPR001304">
    <property type="entry name" value="C-type_lectin-like"/>
</dbReference>
<dbReference type="InterPro" id="IPR016186">
    <property type="entry name" value="C-type_lectin-like/link_sf"/>
</dbReference>
<dbReference type="InterPro" id="IPR018378">
    <property type="entry name" value="C-type_lectin_CS"/>
</dbReference>
<dbReference type="InterPro" id="IPR051663">
    <property type="entry name" value="CLec_Tetranectin-domain"/>
</dbReference>
<dbReference type="InterPro" id="IPR016187">
    <property type="entry name" value="CTDL_fold"/>
</dbReference>
<dbReference type="PANTHER" id="PTHR22799:SF2">
    <property type="entry name" value="C-TYPE LECTIN DOMAIN FAMILY 3 MEMBER A"/>
    <property type="match status" value="1"/>
</dbReference>
<dbReference type="PANTHER" id="PTHR22799">
    <property type="entry name" value="TETRANECTIN-RELATED"/>
    <property type="match status" value="1"/>
</dbReference>
<dbReference type="Pfam" id="PF00059">
    <property type="entry name" value="Lectin_C"/>
    <property type="match status" value="1"/>
</dbReference>
<dbReference type="SMART" id="SM00034">
    <property type="entry name" value="CLECT"/>
    <property type="match status" value="1"/>
</dbReference>
<dbReference type="SUPFAM" id="SSF56436">
    <property type="entry name" value="C-type lectin-like"/>
    <property type="match status" value="1"/>
</dbReference>
<dbReference type="SUPFAM" id="SSF57944">
    <property type="entry name" value="Triple coiled coil domain of C-type lectins"/>
    <property type="match status" value="1"/>
</dbReference>
<dbReference type="PROSITE" id="PS00615">
    <property type="entry name" value="C_TYPE_LECTIN_1"/>
    <property type="match status" value="1"/>
</dbReference>
<dbReference type="PROSITE" id="PS50041">
    <property type="entry name" value="C_TYPE_LECTIN_2"/>
    <property type="match status" value="1"/>
</dbReference>
<keyword id="KW-1015">Disulfide bond</keyword>
<keyword id="KW-0430">Lectin</keyword>
<keyword id="KW-1185">Reference proteome</keyword>
<keyword id="KW-0964">Secreted</keyword>
<keyword id="KW-0732">Signal</keyword>